<evidence type="ECO:0000255" key="1">
    <source>
        <dbReference type="HAMAP-Rule" id="MF_01033"/>
    </source>
</evidence>
<dbReference type="EC" id="1.1.1.85" evidence="1"/>
<dbReference type="EMBL" id="AE000513">
    <property type="protein sequence ID" value="AAF11333.1"/>
    <property type="molecule type" value="Genomic_DNA"/>
</dbReference>
<dbReference type="PIR" id="G75355">
    <property type="entry name" value="G75355"/>
</dbReference>
<dbReference type="RefSeq" id="NP_295508.1">
    <property type="nucleotide sequence ID" value="NC_001263.1"/>
</dbReference>
<dbReference type="RefSeq" id="WP_010888420.1">
    <property type="nucleotide sequence ID" value="NC_001263.1"/>
</dbReference>
<dbReference type="SMR" id="Q9RTH9"/>
<dbReference type="FunCoup" id="Q9RTH9">
    <property type="interactions" value="373"/>
</dbReference>
<dbReference type="STRING" id="243230.DR_1785"/>
<dbReference type="PaxDb" id="243230-DR_1785"/>
<dbReference type="EnsemblBacteria" id="AAF11333">
    <property type="protein sequence ID" value="AAF11333"/>
    <property type="gene ID" value="DR_1785"/>
</dbReference>
<dbReference type="GeneID" id="69518024"/>
<dbReference type="KEGG" id="dra:DR_1785"/>
<dbReference type="PATRIC" id="fig|243230.17.peg.1997"/>
<dbReference type="eggNOG" id="COG0473">
    <property type="taxonomic scope" value="Bacteria"/>
</dbReference>
<dbReference type="HOGENOM" id="CLU_031953_0_3_0"/>
<dbReference type="InParanoid" id="Q9RTH9"/>
<dbReference type="OrthoDB" id="56663at2"/>
<dbReference type="UniPathway" id="UPA00048">
    <property type="reaction ID" value="UER00072"/>
</dbReference>
<dbReference type="Proteomes" id="UP000002524">
    <property type="component" value="Chromosome 1"/>
</dbReference>
<dbReference type="GO" id="GO:0005829">
    <property type="term" value="C:cytosol"/>
    <property type="evidence" value="ECO:0000318"/>
    <property type="project" value="GO_Central"/>
</dbReference>
<dbReference type="GO" id="GO:0003862">
    <property type="term" value="F:3-isopropylmalate dehydrogenase activity"/>
    <property type="evidence" value="ECO:0000318"/>
    <property type="project" value="GO_Central"/>
</dbReference>
<dbReference type="GO" id="GO:0000287">
    <property type="term" value="F:magnesium ion binding"/>
    <property type="evidence" value="ECO:0007669"/>
    <property type="project" value="InterPro"/>
</dbReference>
<dbReference type="GO" id="GO:0051287">
    <property type="term" value="F:NAD binding"/>
    <property type="evidence" value="ECO:0007669"/>
    <property type="project" value="InterPro"/>
</dbReference>
<dbReference type="GO" id="GO:0009098">
    <property type="term" value="P:L-leucine biosynthetic process"/>
    <property type="evidence" value="ECO:0000318"/>
    <property type="project" value="GO_Central"/>
</dbReference>
<dbReference type="FunFam" id="3.40.718.10:FF:000006">
    <property type="entry name" value="3-isopropylmalate dehydrogenase"/>
    <property type="match status" value="1"/>
</dbReference>
<dbReference type="Gene3D" id="3.40.718.10">
    <property type="entry name" value="Isopropylmalate Dehydrogenase"/>
    <property type="match status" value="1"/>
</dbReference>
<dbReference type="HAMAP" id="MF_01033">
    <property type="entry name" value="LeuB_type1"/>
    <property type="match status" value="1"/>
</dbReference>
<dbReference type="InterPro" id="IPR019818">
    <property type="entry name" value="IsoCit/isopropylmalate_DH_CS"/>
</dbReference>
<dbReference type="InterPro" id="IPR024084">
    <property type="entry name" value="IsoPropMal-DH-like_dom"/>
</dbReference>
<dbReference type="InterPro" id="IPR004429">
    <property type="entry name" value="Isopropylmalate_DH"/>
</dbReference>
<dbReference type="NCBIfam" id="TIGR00169">
    <property type="entry name" value="leuB"/>
    <property type="match status" value="1"/>
</dbReference>
<dbReference type="PANTHER" id="PTHR42979">
    <property type="entry name" value="3-ISOPROPYLMALATE DEHYDROGENASE"/>
    <property type="match status" value="1"/>
</dbReference>
<dbReference type="PANTHER" id="PTHR42979:SF1">
    <property type="entry name" value="3-ISOPROPYLMALATE DEHYDROGENASE"/>
    <property type="match status" value="1"/>
</dbReference>
<dbReference type="Pfam" id="PF00180">
    <property type="entry name" value="Iso_dh"/>
    <property type="match status" value="1"/>
</dbReference>
<dbReference type="SMART" id="SM01329">
    <property type="entry name" value="Iso_dh"/>
    <property type="match status" value="1"/>
</dbReference>
<dbReference type="SUPFAM" id="SSF53659">
    <property type="entry name" value="Isocitrate/Isopropylmalate dehydrogenase-like"/>
    <property type="match status" value="1"/>
</dbReference>
<dbReference type="PROSITE" id="PS00470">
    <property type="entry name" value="IDH_IMDH"/>
    <property type="match status" value="1"/>
</dbReference>
<comment type="function">
    <text evidence="1">Catalyzes the oxidation of 3-carboxy-2-hydroxy-4-methylpentanoate (3-isopropylmalate) to 3-carboxy-4-methyl-2-oxopentanoate. The product decarboxylates to 4-methyl-2 oxopentanoate.</text>
</comment>
<comment type="catalytic activity">
    <reaction evidence="1">
        <text>(2R,3S)-3-isopropylmalate + NAD(+) = 4-methyl-2-oxopentanoate + CO2 + NADH</text>
        <dbReference type="Rhea" id="RHEA:32271"/>
        <dbReference type="ChEBI" id="CHEBI:16526"/>
        <dbReference type="ChEBI" id="CHEBI:17865"/>
        <dbReference type="ChEBI" id="CHEBI:35121"/>
        <dbReference type="ChEBI" id="CHEBI:57540"/>
        <dbReference type="ChEBI" id="CHEBI:57945"/>
        <dbReference type="EC" id="1.1.1.85"/>
    </reaction>
</comment>
<comment type="cofactor">
    <cofactor evidence="1">
        <name>Mg(2+)</name>
        <dbReference type="ChEBI" id="CHEBI:18420"/>
    </cofactor>
    <cofactor evidence="1">
        <name>Mn(2+)</name>
        <dbReference type="ChEBI" id="CHEBI:29035"/>
    </cofactor>
    <text evidence="1">Binds 1 Mg(2+) or Mn(2+) ion per subunit.</text>
</comment>
<comment type="pathway">
    <text evidence="1">Amino-acid biosynthesis; L-leucine biosynthesis; L-leucine from 3-methyl-2-oxobutanoate: step 3/4.</text>
</comment>
<comment type="subunit">
    <text evidence="1">Homodimer.</text>
</comment>
<comment type="subcellular location">
    <subcellularLocation>
        <location evidence="1">Cytoplasm</location>
    </subcellularLocation>
</comment>
<comment type="similarity">
    <text evidence="1">Belongs to the isocitrate and isopropylmalate dehydrogenases family. LeuB type 1 subfamily.</text>
</comment>
<sequence>MPKVITLPGDGIGPEVTAAAVQVLREVAPDVTVEEHAIGGGAYDAHGEPFPTSTRDALKEADAVLLGTVGGAHDSAWNQLPRHLRPESGLLALRKALGCYANLRPVRVQPGLEHLSPLKAELARGVDILIVRELLGGIYFDQDRKIEGDTAYNTMRYTTSEVERVAKVAFWAAEQRKGRVTSVDKANVLEVSELWRRDVQALRDRDYRSIHLNHEYVDSVAMLIVADPSRYDVILTENLFGDILSDLAAVIPGSLGLMPSASLGDGAGLFEPIHGSAPDIAGQGVANPAAAIMSVGMLLRHGLERSEAANQVDRAVALALREQPTRDLGGSADTQTFTRAVLKALGSSPSVG</sequence>
<feature type="chain" id="PRO_0000083687" description="3-isopropylmalate dehydrogenase">
    <location>
        <begin position="1"/>
        <end position="352"/>
    </location>
</feature>
<feature type="binding site" evidence="1">
    <location>
        <begin position="71"/>
        <end position="87"/>
    </location>
    <ligand>
        <name>NAD(+)</name>
        <dbReference type="ChEBI" id="CHEBI:57540"/>
    </ligand>
</feature>
<feature type="binding site" evidence="1">
    <location>
        <position position="94"/>
    </location>
    <ligand>
        <name>substrate</name>
    </ligand>
</feature>
<feature type="binding site" evidence="1">
    <location>
        <position position="104"/>
    </location>
    <ligand>
        <name>substrate</name>
    </ligand>
</feature>
<feature type="binding site" evidence="1">
    <location>
        <position position="132"/>
    </location>
    <ligand>
        <name>substrate</name>
    </ligand>
</feature>
<feature type="binding site" evidence="1">
    <location>
        <position position="218"/>
    </location>
    <ligand>
        <name>Mg(2+)</name>
        <dbReference type="ChEBI" id="CHEBI:18420"/>
    </ligand>
</feature>
<feature type="binding site" evidence="1">
    <location>
        <position position="218"/>
    </location>
    <ligand>
        <name>substrate</name>
    </ligand>
</feature>
<feature type="binding site" evidence="1">
    <location>
        <position position="242"/>
    </location>
    <ligand>
        <name>Mg(2+)</name>
        <dbReference type="ChEBI" id="CHEBI:18420"/>
    </ligand>
</feature>
<feature type="binding site" evidence="1">
    <location>
        <position position="246"/>
    </location>
    <ligand>
        <name>Mg(2+)</name>
        <dbReference type="ChEBI" id="CHEBI:18420"/>
    </ligand>
</feature>
<feature type="binding site" evidence="1">
    <location>
        <begin position="275"/>
        <end position="287"/>
    </location>
    <ligand>
        <name>NAD(+)</name>
        <dbReference type="ChEBI" id="CHEBI:57540"/>
    </ligand>
</feature>
<feature type="site" description="Important for catalysis" evidence="1">
    <location>
        <position position="139"/>
    </location>
</feature>
<feature type="site" description="Important for catalysis" evidence="1">
    <location>
        <position position="185"/>
    </location>
</feature>
<accession>Q9RTH9</accession>
<protein>
    <recommendedName>
        <fullName evidence="1">3-isopropylmalate dehydrogenase</fullName>
        <ecNumber evidence="1">1.1.1.85</ecNumber>
    </recommendedName>
    <alternativeName>
        <fullName evidence="1">3-IPM-DH</fullName>
    </alternativeName>
    <alternativeName>
        <fullName evidence="1">Beta-IPM dehydrogenase</fullName>
        <shortName evidence="1">IMDH</shortName>
    </alternativeName>
</protein>
<gene>
    <name evidence="1" type="primary">leuB</name>
    <name type="ordered locus">DR_1785</name>
</gene>
<name>LEU3_DEIRA</name>
<keyword id="KW-0028">Amino-acid biosynthesis</keyword>
<keyword id="KW-0100">Branched-chain amino acid biosynthesis</keyword>
<keyword id="KW-0963">Cytoplasm</keyword>
<keyword id="KW-0432">Leucine biosynthesis</keyword>
<keyword id="KW-0460">Magnesium</keyword>
<keyword id="KW-0464">Manganese</keyword>
<keyword id="KW-0479">Metal-binding</keyword>
<keyword id="KW-0520">NAD</keyword>
<keyword id="KW-0560">Oxidoreductase</keyword>
<keyword id="KW-1185">Reference proteome</keyword>
<proteinExistence type="inferred from homology"/>
<organism>
    <name type="scientific">Deinococcus radiodurans (strain ATCC 13939 / DSM 20539 / JCM 16871 / CCUG 27074 / LMG 4051 / NBRC 15346 / NCIMB 9279 / VKM B-1422 / R1)</name>
    <dbReference type="NCBI Taxonomy" id="243230"/>
    <lineage>
        <taxon>Bacteria</taxon>
        <taxon>Thermotogati</taxon>
        <taxon>Deinococcota</taxon>
        <taxon>Deinococci</taxon>
        <taxon>Deinococcales</taxon>
        <taxon>Deinococcaceae</taxon>
        <taxon>Deinococcus</taxon>
    </lineage>
</organism>
<reference key="1">
    <citation type="journal article" date="1999" name="Science">
        <title>Genome sequence of the radioresistant bacterium Deinococcus radiodurans R1.</title>
        <authorList>
            <person name="White O."/>
            <person name="Eisen J.A."/>
            <person name="Heidelberg J.F."/>
            <person name="Hickey E.K."/>
            <person name="Peterson J.D."/>
            <person name="Dodson R.J."/>
            <person name="Haft D.H."/>
            <person name="Gwinn M.L."/>
            <person name="Nelson W.C."/>
            <person name="Richardson D.L."/>
            <person name="Moffat K.S."/>
            <person name="Qin H."/>
            <person name="Jiang L."/>
            <person name="Pamphile W."/>
            <person name="Crosby M."/>
            <person name="Shen M."/>
            <person name="Vamathevan J.J."/>
            <person name="Lam P."/>
            <person name="McDonald L.A."/>
            <person name="Utterback T.R."/>
            <person name="Zalewski C."/>
            <person name="Makarova K.S."/>
            <person name="Aravind L."/>
            <person name="Daly M.J."/>
            <person name="Minton K.W."/>
            <person name="Fleischmann R.D."/>
            <person name="Ketchum K.A."/>
            <person name="Nelson K.E."/>
            <person name="Salzberg S.L."/>
            <person name="Smith H.O."/>
            <person name="Venter J.C."/>
            <person name="Fraser C.M."/>
        </authorList>
    </citation>
    <scope>NUCLEOTIDE SEQUENCE [LARGE SCALE GENOMIC DNA]</scope>
    <source>
        <strain>ATCC 13939 / DSM 20539 / JCM 16871 / CCUG 27074 / LMG 4051 / NBRC 15346 / NCIMB 9279 / VKM B-1422 / R1</strain>
    </source>
</reference>